<gene>
    <name type="primary">Adhr</name>
    <name type="synonym">Adh-dup</name>
    <name type="ORF">CG3484</name>
</gene>
<proteinExistence type="evidence at transcript level"/>
<reference key="1">
    <citation type="journal article" date="1991" name="Genetics">
        <title>Inferring the evolutionary histories of the Adh and Adh-dup loci in Drosophila melanogaster from patterns of polymorphism and divergence.</title>
        <authorList>
            <person name="Kreitman M."/>
            <person name="Hudson R.R."/>
        </authorList>
    </citation>
    <scope>NUCLEOTIDE SEQUENCE [GENOMIC DNA]</scope>
</reference>
<reference key="2">
    <citation type="journal article" date="1997" name="EMBO J.">
        <title>The Adh-related gene of Drosophila melanogaster is expressed as a functional dicistronic messenger RNA: multigenic transcription in higher organisms.</title>
        <authorList>
            <person name="Brogna S."/>
            <person name="Ashburner M."/>
        </authorList>
    </citation>
    <scope>NUCLEOTIDE SEQUENCE [MRNA]</scope>
    <source>
        <strain>Canton-S</strain>
    </source>
</reference>
<reference key="3">
    <citation type="journal article" date="1999" name="Genetics">
        <title>An exploration of the sequence of a 2.9-Mb region of the genome of Drosophila melanogaster: the Adh region.</title>
        <authorList>
            <person name="Ashburner M."/>
            <person name="Misra S."/>
            <person name="Roote J."/>
            <person name="Lewis S.E."/>
            <person name="Blazej R.G."/>
            <person name="Davis T."/>
            <person name="Doyle C."/>
            <person name="Galle R.F."/>
            <person name="George R.A."/>
            <person name="Harris N.L."/>
            <person name="Hartzell G."/>
            <person name="Harvey D.A."/>
            <person name="Hong L."/>
            <person name="Houston K.A."/>
            <person name="Hoskins R.A."/>
            <person name="Johnson G."/>
            <person name="Martin C."/>
            <person name="Moshrefi A.R."/>
            <person name="Palazzolo M."/>
            <person name="Reese M.G."/>
            <person name="Spradling A.C."/>
            <person name="Tsang G."/>
            <person name="Wan K.H."/>
            <person name="Whitelaw K."/>
            <person name="Celniker S.E."/>
            <person name="Rubin G.M."/>
        </authorList>
    </citation>
    <scope>NUCLEOTIDE SEQUENCE [LARGE SCALE GENOMIC DNA]</scope>
    <source>
        <strain>Berkeley</strain>
    </source>
</reference>
<reference key="4">
    <citation type="journal article" date="2000" name="Science">
        <title>The genome sequence of Drosophila melanogaster.</title>
        <authorList>
            <person name="Adams M.D."/>
            <person name="Celniker S.E."/>
            <person name="Holt R.A."/>
            <person name="Evans C.A."/>
            <person name="Gocayne J.D."/>
            <person name="Amanatides P.G."/>
            <person name="Scherer S.E."/>
            <person name="Li P.W."/>
            <person name="Hoskins R.A."/>
            <person name="Galle R.F."/>
            <person name="George R.A."/>
            <person name="Lewis S.E."/>
            <person name="Richards S."/>
            <person name="Ashburner M."/>
            <person name="Henderson S.N."/>
            <person name="Sutton G.G."/>
            <person name="Wortman J.R."/>
            <person name="Yandell M.D."/>
            <person name="Zhang Q."/>
            <person name="Chen L.X."/>
            <person name="Brandon R.C."/>
            <person name="Rogers Y.-H.C."/>
            <person name="Blazej R.G."/>
            <person name="Champe M."/>
            <person name="Pfeiffer B.D."/>
            <person name="Wan K.H."/>
            <person name="Doyle C."/>
            <person name="Baxter E.G."/>
            <person name="Helt G."/>
            <person name="Nelson C.R."/>
            <person name="Miklos G.L.G."/>
            <person name="Abril J.F."/>
            <person name="Agbayani A."/>
            <person name="An H.-J."/>
            <person name="Andrews-Pfannkoch C."/>
            <person name="Baldwin D."/>
            <person name="Ballew R.M."/>
            <person name="Basu A."/>
            <person name="Baxendale J."/>
            <person name="Bayraktaroglu L."/>
            <person name="Beasley E.M."/>
            <person name="Beeson K.Y."/>
            <person name="Benos P.V."/>
            <person name="Berman B.P."/>
            <person name="Bhandari D."/>
            <person name="Bolshakov S."/>
            <person name="Borkova D."/>
            <person name="Botchan M.R."/>
            <person name="Bouck J."/>
            <person name="Brokstein P."/>
            <person name="Brottier P."/>
            <person name="Burtis K.C."/>
            <person name="Busam D.A."/>
            <person name="Butler H."/>
            <person name="Cadieu E."/>
            <person name="Center A."/>
            <person name="Chandra I."/>
            <person name="Cherry J.M."/>
            <person name="Cawley S."/>
            <person name="Dahlke C."/>
            <person name="Davenport L.B."/>
            <person name="Davies P."/>
            <person name="de Pablos B."/>
            <person name="Delcher A."/>
            <person name="Deng Z."/>
            <person name="Mays A.D."/>
            <person name="Dew I."/>
            <person name="Dietz S.M."/>
            <person name="Dodson K."/>
            <person name="Doup L.E."/>
            <person name="Downes M."/>
            <person name="Dugan-Rocha S."/>
            <person name="Dunkov B.C."/>
            <person name="Dunn P."/>
            <person name="Durbin K.J."/>
            <person name="Evangelista C.C."/>
            <person name="Ferraz C."/>
            <person name="Ferriera S."/>
            <person name="Fleischmann W."/>
            <person name="Fosler C."/>
            <person name="Gabrielian A.E."/>
            <person name="Garg N.S."/>
            <person name="Gelbart W.M."/>
            <person name="Glasser K."/>
            <person name="Glodek A."/>
            <person name="Gong F."/>
            <person name="Gorrell J.H."/>
            <person name="Gu Z."/>
            <person name="Guan P."/>
            <person name="Harris M."/>
            <person name="Harris N.L."/>
            <person name="Harvey D.A."/>
            <person name="Heiman T.J."/>
            <person name="Hernandez J.R."/>
            <person name="Houck J."/>
            <person name="Hostin D."/>
            <person name="Houston K.A."/>
            <person name="Howland T.J."/>
            <person name="Wei M.-H."/>
            <person name="Ibegwam C."/>
            <person name="Jalali M."/>
            <person name="Kalush F."/>
            <person name="Karpen G.H."/>
            <person name="Ke Z."/>
            <person name="Kennison J.A."/>
            <person name="Ketchum K.A."/>
            <person name="Kimmel B.E."/>
            <person name="Kodira C.D."/>
            <person name="Kraft C.L."/>
            <person name="Kravitz S."/>
            <person name="Kulp D."/>
            <person name="Lai Z."/>
            <person name="Lasko P."/>
            <person name="Lei Y."/>
            <person name="Levitsky A.A."/>
            <person name="Li J.H."/>
            <person name="Li Z."/>
            <person name="Liang Y."/>
            <person name="Lin X."/>
            <person name="Liu X."/>
            <person name="Mattei B."/>
            <person name="McIntosh T.C."/>
            <person name="McLeod M.P."/>
            <person name="McPherson D."/>
            <person name="Merkulov G."/>
            <person name="Milshina N.V."/>
            <person name="Mobarry C."/>
            <person name="Morris J."/>
            <person name="Moshrefi A."/>
            <person name="Mount S.M."/>
            <person name="Moy M."/>
            <person name="Murphy B."/>
            <person name="Murphy L."/>
            <person name="Muzny D.M."/>
            <person name="Nelson D.L."/>
            <person name="Nelson D.R."/>
            <person name="Nelson K.A."/>
            <person name="Nixon K."/>
            <person name="Nusskern D.R."/>
            <person name="Pacleb J.M."/>
            <person name="Palazzolo M."/>
            <person name="Pittman G.S."/>
            <person name="Pan S."/>
            <person name="Pollard J."/>
            <person name="Puri V."/>
            <person name="Reese M.G."/>
            <person name="Reinert K."/>
            <person name="Remington K."/>
            <person name="Saunders R.D.C."/>
            <person name="Scheeler F."/>
            <person name="Shen H."/>
            <person name="Shue B.C."/>
            <person name="Siden-Kiamos I."/>
            <person name="Simpson M."/>
            <person name="Skupski M.P."/>
            <person name="Smith T.J."/>
            <person name="Spier E."/>
            <person name="Spradling A.C."/>
            <person name="Stapleton M."/>
            <person name="Strong R."/>
            <person name="Sun E."/>
            <person name="Svirskas R."/>
            <person name="Tector C."/>
            <person name="Turner R."/>
            <person name="Venter E."/>
            <person name="Wang A.H."/>
            <person name="Wang X."/>
            <person name="Wang Z.-Y."/>
            <person name="Wassarman D.A."/>
            <person name="Weinstock G.M."/>
            <person name="Weissenbach J."/>
            <person name="Williams S.M."/>
            <person name="Woodage T."/>
            <person name="Worley K.C."/>
            <person name="Wu D."/>
            <person name="Yang S."/>
            <person name="Yao Q.A."/>
            <person name="Ye J."/>
            <person name="Yeh R.-F."/>
            <person name="Zaveri J.S."/>
            <person name="Zhan M."/>
            <person name="Zhang G."/>
            <person name="Zhao Q."/>
            <person name="Zheng L."/>
            <person name="Zheng X.H."/>
            <person name="Zhong F.N."/>
            <person name="Zhong W."/>
            <person name="Zhou X."/>
            <person name="Zhu S.C."/>
            <person name="Zhu X."/>
            <person name="Smith H.O."/>
            <person name="Gibbs R.A."/>
            <person name="Myers E.W."/>
            <person name="Rubin G.M."/>
            <person name="Venter J.C."/>
        </authorList>
    </citation>
    <scope>NUCLEOTIDE SEQUENCE [LARGE SCALE GENOMIC DNA]</scope>
    <source>
        <strain>Berkeley</strain>
    </source>
</reference>
<reference key="5">
    <citation type="journal article" date="2002" name="Genome Biol.">
        <title>Annotation of the Drosophila melanogaster euchromatic genome: a systematic review.</title>
        <authorList>
            <person name="Misra S."/>
            <person name="Crosby M.A."/>
            <person name="Mungall C.J."/>
            <person name="Matthews B.B."/>
            <person name="Campbell K.S."/>
            <person name="Hradecky P."/>
            <person name="Huang Y."/>
            <person name="Kaminker J.S."/>
            <person name="Millburn G.H."/>
            <person name="Prochnik S.E."/>
            <person name="Smith C.D."/>
            <person name="Tupy J.L."/>
            <person name="Whitfield E.J."/>
            <person name="Bayraktaroglu L."/>
            <person name="Berman B.P."/>
            <person name="Bettencourt B.R."/>
            <person name="Celniker S.E."/>
            <person name="de Grey A.D.N.J."/>
            <person name="Drysdale R.A."/>
            <person name="Harris N.L."/>
            <person name="Richter J."/>
            <person name="Russo S."/>
            <person name="Schroeder A.J."/>
            <person name="Shu S.Q."/>
            <person name="Stapleton M."/>
            <person name="Yamada C."/>
            <person name="Ashburner M."/>
            <person name="Gelbart W.M."/>
            <person name="Rubin G.M."/>
            <person name="Lewis S.E."/>
        </authorList>
    </citation>
    <scope>GENOME REANNOTATION</scope>
    <source>
        <strain>Berkeley</strain>
    </source>
</reference>
<reference key="6">
    <citation type="thesis" date="1983" institute="University of Cambridge" country="United Kingdom">
        <authorList>
            <person name="Haymerle H."/>
        </authorList>
    </citation>
    <scope>NUCLEOTIDE SEQUENCE [GENOMIC DNA] OF 1-77</scope>
</reference>
<accession>P91615</accession>
<accession>A4V0Q4</accession>
<accession>Q24230</accession>
<accession>Q6LAE8</accession>
<accession>Q9NKB9</accession>
<accession>Q9VJS2</accession>
<comment type="similarity">
    <text evidence="3">Belongs to the short-chain dehydrogenases/reductases (SDR) family.</text>
</comment>
<organism>
    <name type="scientific">Drosophila melanogaster</name>
    <name type="common">Fruit fly</name>
    <dbReference type="NCBI Taxonomy" id="7227"/>
    <lineage>
        <taxon>Eukaryota</taxon>
        <taxon>Metazoa</taxon>
        <taxon>Ecdysozoa</taxon>
        <taxon>Arthropoda</taxon>
        <taxon>Hexapoda</taxon>
        <taxon>Insecta</taxon>
        <taxon>Pterygota</taxon>
        <taxon>Neoptera</taxon>
        <taxon>Endopterygota</taxon>
        <taxon>Diptera</taxon>
        <taxon>Brachycera</taxon>
        <taxon>Muscomorpha</taxon>
        <taxon>Ephydroidea</taxon>
        <taxon>Drosophilidae</taxon>
        <taxon>Drosophila</taxon>
        <taxon>Sophophora</taxon>
    </lineage>
</organism>
<keyword id="KW-0560">Oxidoreductase</keyword>
<keyword id="KW-1185">Reference proteome</keyword>
<evidence type="ECO:0000250" key="1"/>
<evidence type="ECO:0000255" key="2">
    <source>
        <dbReference type="PROSITE-ProRule" id="PRU10001"/>
    </source>
</evidence>
<evidence type="ECO:0000305" key="3"/>
<sequence>MFDLTGKHVCYVADCGGIALETSKVLMTKNIAKLAILQSTENPQAIAQLQSIKPSTQIFFWTYDVTMAREDMKKYFDEVMVQMDYIDVLINGATLCDENNIDATINTNLTGMMNTVATVLPYMDRKMGGTGGLIVNVTSVIGLDPSPVFCAYSASKFGVIGFTRSLADPLYYSQNGVAVMAVCCGPTRVFVDRELKAFLEYGQSFADRLRRAPCQSTSVCGQNIVNAIERSENGQIWIADKGGLELVKLHWYWHMADQFVHYMQSNDEEDQD</sequence>
<dbReference type="EMBL" id="X78384">
    <property type="protein sequence ID" value="CAA55152.1"/>
    <property type="molecule type" value="Genomic_DNA"/>
</dbReference>
<dbReference type="EMBL" id="X98338">
    <property type="protein sequence ID" value="CAA66982.1"/>
    <property type="molecule type" value="mRNA"/>
</dbReference>
<dbReference type="EMBL" id="AE014134">
    <property type="protein sequence ID" value="AAF53404.1"/>
    <property type="molecule type" value="Genomic_DNA"/>
</dbReference>
<dbReference type="EMBL" id="AE014134">
    <property type="protein sequence ID" value="AAO41202.1"/>
    <property type="molecule type" value="Genomic_DNA"/>
</dbReference>
<dbReference type="EMBL" id="Z00030">
    <property type="protein sequence ID" value="CAA77331.1"/>
    <property type="molecule type" value="Genomic_DNA"/>
</dbReference>
<dbReference type="RefSeq" id="NP_001027272.1">
    <property type="nucleotide sequence ID" value="NM_001032101.2"/>
</dbReference>
<dbReference type="RefSeq" id="NP_001285938.1">
    <property type="nucleotide sequence ID" value="NM_001299009.1"/>
</dbReference>
<dbReference type="RefSeq" id="NP_477495.1">
    <property type="nucleotide sequence ID" value="NM_058147.4"/>
</dbReference>
<dbReference type="SMR" id="P91615"/>
<dbReference type="DIP" id="DIP-21911N"/>
<dbReference type="FunCoup" id="P91615">
    <property type="interactions" value="26"/>
</dbReference>
<dbReference type="STRING" id="7227.FBpp0099544"/>
<dbReference type="PaxDb" id="7227-FBpp0099544"/>
<dbReference type="EnsemblMetazoa" id="FBtr0006151">
    <property type="protein sequence ID" value="FBpp0099544"/>
    <property type="gene ID" value="FBgn0000056"/>
</dbReference>
<dbReference type="EnsemblMetazoa" id="FBtr0100187">
    <property type="protein sequence ID" value="FBpp0099545"/>
    <property type="gene ID" value="FBgn0000056"/>
</dbReference>
<dbReference type="EnsemblMetazoa" id="FBtr0343699">
    <property type="protein sequence ID" value="FBpp0310282"/>
    <property type="gene ID" value="FBgn0000056"/>
</dbReference>
<dbReference type="GeneID" id="3772432"/>
<dbReference type="KEGG" id="dme:Dmel_CG3484"/>
<dbReference type="UCSC" id="CG3484-RA">
    <property type="organism name" value="d. melanogaster"/>
</dbReference>
<dbReference type="AGR" id="FB:FBgn0000056"/>
<dbReference type="CTD" id="3772432"/>
<dbReference type="FlyBase" id="FBgn0000056">
    <property type="gene designation" value="Adhr"/>
</dbReference>
<dbReference type="VEuPathDB" id="VectorBase:FBgn0000056"/>
<dbReference type="eggNOG" id="KOG4169">
    <property type="taxonomic scope" value="Eukaryota"/>
</dbReference>
<dbReference type="HOGENOM" id="CLU_010194_2_16_1"/>
<dbReference type="InParanoid" id="P91615"/>
<dbReference type="OMA" id="CDEQDID"/>
<dbReference type="OrthoDB" id="417891at2759"/>
<dbReference type="PhylomeDB" id="P91615"/>
<dbReference type="Reactome" id="R-DME-2142700">
    <property type="pathway name" value="Biosynthesis of Lipoxins (LX)"/>
</dbReference>
<dbReference type="Reactome" id="R-DME-9018676">
    <property type="pathway name" value="Biosynthesis of D-series resolvins"/>
</dbReference>
<dbReference type="Reactome" id="R-DME-9018896">
    <property type="pathway name" value="Biosynthesis of E-series 18(S)-resolvins"/>
</dbReference>
<dbReference type="BioGRID-ORCS" id="3772432">
    <property type="hits" value="0 hits in 1 CRISPR screen"/>
</dbReference>
<dbReference type="GenomeRNAi" id="3772432"/>
<dbReference type="PRO" id="PR:P91615"/>
<dbReference type="Proteomes" id="UP000000803">
    <property type="component" value="Chromosome 2L"/>
</dbReference>
<dbReference type="Bgee" id="FBgn0000056">
    <property type="expression patterns" value="Expressed in insect adult head and 20 other cell types or tissues"/>
</dbReference>
<dbReference type="GO" id="GO:0005737">
    <property type="term" value="C:cytoplasm"/>
    <property type="evidence" value="ECO:0000318"/>
    <property type="project" value="GO_Central"/>
</dbReference>
<dbReference type="CDD" id="cd05323">
    <property type="entry name" value="ADH_SDR_c_like"/>
    <property type="match status" value="1"/>
</dbReference>
<dbReference type="Gene3D" id="3.40.50.720">
    <property type="entry name" value="NAD(P)-binding Rossmann-like Domain"/>
    <property type="match status" value="1"/>
</dbReference>
<dbReference type="InterPro" id="IPR002427">
    <property type="entry name" value="ADH-rel"/>
</dbReference>
<dbReference type="InterPro" id="IPR036291">
    <property type="entry name" value="NAD(P)-bd_dom_sf"/>
</dbReference>
<dbReference type="InterPro" id="IPR020904">
    <property type="entry name" value="Sc_DH/Rdtase_CS"/>
</dbReference>
<dbReference type="InterPro" id="IPR002347">
    <property type="entry name" value="SDR_fam"/>
</dbReference>
<dbReference type="PANTHER" id="PTHR44229">
    <property type="entry name" value="15-HYDROXYPROSTAGLANDIN DEHYDROGENASE [NAD(+)]"/>
    <property type="match status" value="1"/>
</dbReference>
<dbReference type="PANTHER" id="PTHR44229:SF8">
    <property type="entry name" value="ALCOHOL DEHYDROGENASE-RELATED"/>
    <property type="match status" value="1"/>
</dbReference>
<dbReference type="Pfam" id="PF00106">
    <property type="entry name" value="adh_short"/>
    <property type="match status" value="1"/>
</dbReference>
<dbReference type="PRINTS" id="PR01170">
    <property type="entry name" value="ADHRELATED"/>
</dbReference>
<dbReference type="PRINTS" id="PR01167">
    <property type="entry name" value="INSADHFAMILY"/>
</dbReference>
<dbReference type="PRINTS" id="PR00080">
    <property type="entry name" value="SDRFAMILY"/>
</dbReference>
<dbReference type="SUPFAM" id="SSF51735">
    <property type="entry name" value="NAD(P)-binding Rossmann-fold domains"/>
    <property type="match status" value="1"/>
</dbReference>
<dbReference type="PROSITE" id="PS00061">
    <property type="entry name" value="ADH_SHORT"/>
    <property type="match status" value="1"/>
</dbReference>
<protein>
    <recommendedName>
        <fullName>Alcohol dehydrogenase-related 31 kDa protein</fullName>
    </recommendedName>
</protein>
<feature type="chain" id="PRO_0000054509" description="Alcohol dehydrogenase-related 31 kDa protein">
    <location>
        <begin position="1"/>
        <end position="272"/>
    </location>
</feature>
<feature type="active site" description="Proton acceptor" evidence="2">
    <location>
        <position position="152"/>
    </location>
</feature>
<feature type="binding site" evidence="1">
    <location>
        <begin position="11"/>
        <end position="34"/>
    </location>
    <ligand>
        <name>NAD(+)</name>
        <dbReference type="ChEBI" id="CHEBI:57540"/>
    </ligand>
</feature>
<feature type="binding site" evidence="1">
    <location>
        <position position="139"/>
    </location>
    <ligand>
        <name>substrate</name>
    </ligand>
</feature>
<feature type="sequence conflict" description="In Ref. 1; CAA55152." evidence="3" ref="1">
    <original>M</original>
    <variation>I</variation>
    <location>
        <position position="127"/>
    </location>
</feature>
<name>ADHR_DROME</name>